<feature type="chain" id="PRO_0000184928" description="Iron-sulfur cluster carrier protein">
    <location>
        <begin position="1"/>
        <end position="364"/>
    </location>
</feature>
<feature type="region of interest" description="Disordered" evidence="2">
    <location>
        <begin position="83"/>
        <end position="102"/>
    </location>
</feature>
<feature type="compositionally biased region" description="Low complexity" evidence="2">
    <location>
        <begin position="83"/>
        <end position="92"/>
    </location>
</feature>
<feature type="binding site" evidence="1">
    <location>
        <begin position="120"/>
        <end position="127"/>
    </location>
    <ligand>
        <name>ATP</name>
        <dbReference type="ChEBI" id="CHEBI:30616"/>
    </ligand>
</feature>
<name>APBC_AQUAE</name>
<accession>O66946</accession>
<dbReference type="EMBL" id="AE000657">
    <property type="protein sequence ID" value="AAC06915.1"/>
    <property type="molecule type" value="Genomic_DNA"/>
</dbReference>
<dbReference type="PIR" id="G70364">
    <property type="entry name" value="G70364"/>
</dbReference>
<dbReference type="RefSeq" id="NP_213507.1">
    <property type="nucleotide sequence ID" value="NC_000918.1"/>
</dbReference>
<dbReference type="RefSeq" id="WP_010880445.1">
    <property type="nucleotide sequence ID" value="NC_000918.1"/>
</dbReference>
<dbReference type="SMR" id="O66946"/>
<dbReference type="FunCoup" id="O66946">
    <property type="interactions" value="405"/>
</dbReference>
<dbReference type="STRING" id="224324.aq_737"/>
<dbReference type="EnsemblBacteria" id="AAC06915">
    <property type="protein sequence ID" value="AAC06915"/>
    <property type="gene ID" value="aq_737"/>
</dbReference>
<dbReference type="KEGG" id="aae:aq_737"/>
<dbReference type="PATRIC" id="fig|224324.8.peg.590"/>
<dbReference type="eggNOG" id="COG0489">
    <property type="taxonomic scope" value="Bacteria"/>
</dbReference>
<dbReference type="HOGENOM" id="CLU_024839_0_0_0"/>
<dbReference type="InParanoid" id="O66946"/>
<dbReference type="OrthoDB" id="9809679at2"/>
<dbReference type="Proteomes" id="UP000000798">
    <property type="component" value="Chromosome"/>
</dbReference>
<dbReference type="GO" id="GO:0051539">
    <property type="term" value="F:4 iron, 4 sulfur cluster binding"/>
    <property type="evidence" value="ECO:0000318"/>
    <property type="project" value="GO_Central"/>
</dbReference>
<dbReference type="GO" id="GO:0005524">
    <property type="term" value="F:ATP binding"/>
    <property type="evidence" value="ECO:0007669"/>
    <property type="project" value="UniProtKB-UniRule"/>
</dbReference>
<dbReference type="GO" id="GO:0016887">
    <property type="term" value="F:ATP hydrolysis activity"/>
    <property type="evidence" value="ECO:0007669"/>
    <property type="project" value="UniProtKB-UniRule"/>
</dbReference>
<dbReference type="GO" id="GO:0140663">
    <property type="term" value="F:ATP-dependent FeS chaperone activity"/>
    <property type="evidence" value="ECO:0007669"/>
    <property type="project" value="InterPro"/>
</dbReference>
<dbReference type="GO" id="GO:0046872">
    <property type="term" value="F:metal ion binding"/>
    <property type="evidence" value="ECO:0007669"/>
    <property type="project" value="UniProtKB-KW"/>
</dbReference>
<dbReference type="GO" id="GO:0016226">
    <property type="term" value="P:iron-sulfur cluster assembly"/>
    <property type="evidence" value="ECO:0000318"/>
    <property type="project" value="GO_Central"/>
</dbReference>
<dbReference type="CDD" id="cd02037">
    <property type="entry name" value="Mrp_NBP35"/>
    <property type="match status" value="1"/>
</dbReference>
<dbReference type="FunFam" id="3.40.50.300:FF:001119">
    <property type="entry name" value="Iron-sulfur cluster carrier protein"/>
    <property type="match status" value="1"/>
</dbReference>
<dbReference type="Gene3D" id="3.40.50.300">
    <property type="entry name" value="P-loop containing nucleotide triphosphate hydrolases"/>
    <property type="match status" value="1"/>
</dbReference>
<dbReference type="HAMAP" id="MF_02040">
    <property type="entry name" value="Mrp_NBP35"/>
    <property type="match status" value="1"/>
</dbReference>
<dbReference type="InterPro" id="IPR000808">
    <property type="entry name" value="Mrp-like_CS"/>
</dbReference>
<dbReference type="InterPro" id="IPR019591">
    <property type="entry name" value="Mrp/NBP35_ATP-bd"/>
</dbReference>
<dbReference type="InterPro" id="IPR044304">
    <property type="entry name" value="NUBPL-like"/>
</dbReference>
<dbReference type="InterPro" id="IPR027417">
    <property type="entry name" value="P-loop_NTPase"/>
</dbReference>
<dbReference type="InterPro" id="IPR033756">
    <property type="entry name" value="YlxH/NBP35"/>
</dbReference>
<dbReference type="PANTHER" id="PTHR42961">
    <property type="entry name" value="IRON-SULFUR PROTEIN NUBPL"/>
    <property type="match status" value="1"/>
</dbReference>
<dbReference type="PANTHER" id="PTHR42961:SF2">
    <property type="entry name" value="IRON-SULFUR PROTEIN NUBPL"/>
    <property type="match status" value="1"/>
</dbReference>
<dbReference type="Pfam" id="PF10609">
    <property type="entry name" value="ParA"/>
    <property type="match status" value="1"/>
</dbReference>
<dbReference type="SUPFAM" id="SSF52540">
    <property type="entry name" value="P-loop containing nucleoside triphosphate hydrolases"/>
    <property type="match status" value="1"/>
</dbReference>
<dbReference type="PROSITE" id="PS01215">
    <property type="entry name" value="MRP"/>
    <property type="match status" value="1"/>
</dbReference>
<reference key="1">
    <citation type="journal article" date="1998" name="Nature">
        <title>The complete genome of the hyperthermophilic bacterium Aquifex aeolicus.</title>
        <authorList>
            <person name="Deckert G."/>
            <person name="Warren P.V."/>
            <person name="Gaasterland T."/>
            <person name="Young W.G."/>
            <person name="Lenox A.L."/>
            <person name="Graham D.E."/>
            <person name="Overbeek R."/>
            <person name="Snead M.A."/>
            <person name="Keller M."/>
            <person name="Aujay M."/>
            <person name="Huber R."/>
            <person name="Feldman R.A."/>
            <person name="Short J.M."/>
            <person name="Olsen G.J."/>
            <person name="Swanson R.V."/>
        </authorList>
    </citation>
    <scope>NUCLEOTIDE SEQUENCE [LARGE SCALE GENOMIC DNA]</scope>
    <source>
        <strain>VF5</strain>
    </source>
</reference>
<comment type="function">
    <text evidence="1">Binds and transfers iron-sulfur (Fe-S) clusters to target apoproteins. Can hydrolyze ATP.</text>
</comment>
<comment type="subunit">
    <text evidence="1">Homodimer.</text>
</comment>
<comment type="similarity">
    <text evidence="1">Belongs to the Mrp/NBP35 ATP-binding proteins family.</text>
</comment>
<gene>
    <name type="primary">mrp</name>
    <name type="ordered locus">aq_737</name>
</gene>
<protein>
    <recommendedName>
        <fullName evidence="1">Iron-sulfur cluster carrier protein</fullName>
    </recommendedName>
</protein>
<evidence type="ECO:0000255" key="1">
    <source>
        <dbReference type="HAMAP-Rule" id="MF_02040"/>
    </source>
</evidence>
<evidence type="ECO:0000256" key="2">
    <source>
        <dbReference type="SAM" id="MobiDB-lite"/>
    </source>
</evidence>
<sequence length="364" mass="39492">MAVQDVIEALKKETLEDVGINQNLAQLVKDIKMVGNVLTIVFEPPKQGLEDIIRAKVIDALGNLPEVQKIDVKFVKPQAQIPVKQQAPQQQQTPPPQTQQPMFTRKKVPGVKHIIAVGSGKGGVGKSTVAANLAVALSQLGYKVGLLDADVYGPSVPTLFGLKGERVTVDQFQRIIPVEKYGLKILSIGFMLPSEDTPIIWRGPMLMKALTEFLFSTKWGNLDFLVMDLPPGTGDVQITLAQNVELTGAVVVTTPQDVALADVKKAVSMFREVNIPVLGVIENMAYFICPSDKQKYYIFGKGKVAEFANAYGLKILGSIPIDPEVAEKSDKGEPIVISHPDSEVAKAFLSIAKVLSQVVESKVN</sequence>
<keyword id="KW-0067">ATP-binding</keyword>
<keyword id="KW-0378">Hydrolase</keyword>
<keyword id="KW-0408">Iron</keyword>
<keyword id="KW-0411">Iron-sulfur</keyword>
<keyword id="KW-0479">Metal-binding</keyword>
<keyword id="KW-0547">Nucleotide-binding</keyword>
<keyword id="KW-1185">Reference proteome</keyword>
<organism>
    <name type="scientific">Aquifex aeolicus (strain VF5)</name>
    <dbReference type="NCBI Taxonomy" id="224324"/>
    <lineage>
        <taxon>Bacteria</taxon>
        <taxon>Pseudomonadati</taxon>
        <taxon>Aquificota</taxon>
        <taxon>Aquificia</taxon>
        <taxon>Aquificales</taxon>
        <taxon>Aquificaceae</taxon>
        <taxon>Aquifex</taxon>
    </lineage>
</organism>
<proteinExistence type="inferred from homology"/>